<gene>
    <name evidence="6" type="primary">gene 19</name>
</gene>
<dbReference type="EC" id="3.4.-.-"/>
<dbReference type="EMBL" id="AF064539">
    <property type="protein sequence ID" value="AAC19055.1"/>
    <property type="molecule type" value="Genomic_DNA"/>
</dbReference>
<dbReference type="PIR" id="T13105">
    <property type="entry name" value="T13105"/>
</dbReference>
<dbReference type="RefSeq" id="NP_046914.1">
    <property type="nucleotide sequence ID" value="NC_001901.1"/>
</dbReference>
<dbReference type="SMR" id="O64333"/>
<dbReference type="GeneID" id="1261658"/>
<dbReference type="KEGG" id="vg:1261658"/>
<dbReference type="Proteomes" id="UP000002132">
    <property type="component" value="Genome"/>
</dbReference>
<dbReference type="GO" id="GO:0030430">
    <property type="term" value="C:host cell cytoplasm"/>
    <property type="evidence" value="ECO:0007669"/>
    <property type="project" value="UniProtKB-SubCell"/>
</dbReference>
<dbReference type="GO" id="GO:0008234">
    <property type="term" value="F:cysteine-type peptidase activity"/>
    <property type="evidence" value="ECO:0007669"/>
    <property type="project" value="UniProtKB-KW"/>
</dbReference>
<dbReference type="GO" id="GO:0008235">
    <property type="term" value="F:metalloexopeptidase activity"/>
    <property type="evidence" value="ECO:0007669"/>
    <property type="project" value="TreeGrafter"/>
</dbReference>
<dbReference type="GO" id="GO:0008270">
    <property type="term" value="F:zinc ion binding"/>
    <property type="evidence" value="ECO:0007669"/>
    <property type="project" value="TreeGrafter"/>
</dbReference>
<dbReference type="GO" id="GO:0006508">
    <property type="term" value="P:proteolysis"/>
    <property type="evidence" value="ECO:0007669"/>
    <property type="project" value="UniProtKB-KW"/>
</dbReference>
<dbReference type="GO" id="GO:0001897">
    <property type="term" value="P:symbiont-mediated cytolysis of host cell"/>
    <property type="evidence" value="ECO:0007669"/>
    <property type="project" value="UniProtKB-ARBA"/>
</dbReference>
<dbReference type="GO" id="GO:0098003">
    <property type="term" value="P:viral tail assembly"/>
    <property type="evidence" value="ECO:0007669"/>
    <property type="project" value="UniProtKB-KW"/>
</dbReference>
<dbReference type="CDD" id="cd08073">
    <property type="entry name" value="MPN_NLPC_P60"/>
    <property type="match status" value="1"/>
</dbReference>
<dbReference type="Gene3D" id="3.40.140.10">
    <property type="entry name" value="Cytidine Deaminase, domain 2"/>
    <property type="match status" value="1"/>
</dbReference>
<dbReference type="Gene3D" id="3.90.1720.10">
    <property type="entry name" value="endopeptidase domain like (from Nostoc punctiforme)"/>
    <property type="match status" value="1"/>
</dbReference>
<dbReference type="InterPro" id="IPR028090">
    <property type="entry name" value="JAB_dom_prok"/>
</dbReference>
<dbReference type="InterPro" id="IPR000555">
    <property type="entry name" value="JAMM/MPN+_dom"/>
</dbReference>
<dbReference type="InterPro" id="IPR037518">
    <property type="entry name" value="MPN"/>
</dbReference>
<dbReference type="InterPro" id="IPR000064">
    <property type="entry name" value="NLP_P60_dom"/>
</dbReference>
<dbReference type="InterPro" id="IPR038765">
    <property type="entry name" value="Papain-like_cys_pep_sf"/>
</dbReference>
<dbReference type="InterPro" id="IPR051929">
    <property type="entry name" value="VirAsm_ModProt"/>
</dbReference>
<dbReference type="PANTHER" id="PTHR34858">
    <property type="entry name" value="CYSO-CYSTEINE PEPTIDASE"/>
    <property type="match status" value="1"/>
</dbReference>
<dbReference type="PANTHER" id="PTHR34858:SF1">
    <property type="entry name" value="CYSO-CYSTEINE PEPTIDASE"/>
    <property type="match status" value="1"/>
</dbReference>
<dbReference type="Pfam" id="PF00877">
    <property type="entry name" value="NLPC_P60"/>
    <property type="match status" value="1"/>
</dbReference>
<dbReference type="Pfam" id="PF14464">
    <property type="entry name" value="Prok-JAB"/>
    <property type="match status" value="1"/>
</dbReference>
<dbReference type="SMART" id="SM00232">
    <property type="entry name" value="JAB_MPN"/>
    <property type="match status" value="1"/>
</dbReference>
<dbReference type="SUPFAM" id="SSF54001">
    <property type="entry name" value="Cysteine proteinases"/>
    <property type="match status" value="1"/>
</dbReference>
<dbReference type="SUPFAM" id="SSF102712">
    <property type="entry name" value="JAB1/MPN domain"/>
    <property type="match status" value="1"/>
</dbReference>
<dbReference type="PROSITE" id="PS50249">
    <property type="entry name" value="MPN"/>
    <property type="match status" value="1"/>
</dbReference>
<dbReference type="PROSITE" id="PS51935">
    <property type="entry name" value="NLPC_P60"/>
    <property type="match status" value="1"/>
</dbReference>
<feature type="chain" id="PRO_0000432900" description="Tail tip assembly protein K">
    <location>
        <begin position="1"/>
        <end position="243"/>
    </location>
</feature>
<feature type="domain" description="MPN" evidence="2">
    <location>
        <begin position="1"/>
        <end position="120"/>
    </location>
</feature>
<feature type="domain" description="NlpC/P60" evidence="3">
    <location>
        <begin position="96"/>
        <end position="233"/>
    </location>
</feature>
<feature type="short sequence motif" description="JAMM motif" evidence="2">
    <location>
        <begin position="69"/>
        <end position="82"/>
    </location>
</feature>
<feature type="active site" description="Nucleophile" evidence="3">
    <location>
        <position position="126"/>
    </location>
</feature>
<feature type="active site" description="Proton acceptor" evidence="3">
    <location>
        <position position="194"/>
    </location>
</feature>
<feature type="active site" evidence="3">
    <location>
        <position position="206"/>
    </location>
</feature>
<feature type="binding site" evidence="2">
    <location>
        <position position="69"/>
    </location>
    <ligand>
        <name>Zn(2+)</name>
        <dbReference type="ChEBI" id="CHEBI:29105"/>
        <note>catalytic</note>
    </ligand>
</feature>
<feature type="binding site" evidence="2">
    <location>
        <position position="71"/>
    </location>
    <ligand>
        <name>Zn(2+)</name>
        <dbReference type="ChEBI" id="CHEBI:29105"/>
        <note>catalytic</note>
    </ligand>
</feature>
<feature type="binding site" evidence="2">
    <location>
        <position position="82"/>
    </location>
    <ligand>
        <name>Zn(2+)</name>
        <dbReference type="ChEBI" id="CHEBI:29105"/>
        <note>catalytic</note>
    </ligand>
</feature>
<organismHost>
    <name type="scientific">Escherichia coli</name>
    <dbReference type="NCBI Taxonomy" id="562"/>
</organismHost>
<keyword id="KW-1035">Host cytoplasm</keyword>
<keyword id="KW-0378">Hydrolase</keyword>
<keyword id="KW-0426">Late protein</keyword>
<keyword id="KW-0479">Metal-binding</keyword>
<keyword id="KW-0482">Metalloprotease</keyword>
<keyword id="KW-0645">Protease</keyword>
<keyword id="KW-1185">Reference proteome</keyword>
<keyword id="KW-0788">Thiol protease</keyword>
<keyword id="KW-1188">Viral release from host cell</keyword>
<keyword id="KW-1245">Viral tail assembly</keyword>
<keyword id="KW-0862">Zinc</keyword>
<organism evidence="7">
    <name type="scientific">Escherichia phage N15</name>
    <name type="common">Bacteriophage N15</name>
    <dbReference type="NCBI Taxonomy" id="1604876"/>
    <lineage>
        <taxon>Viruses</taxon>
        <taxon>Duplodnaviria</taxon>
        <taxon>Heunggongvirae</taxon>
        <taxon>Uroviricota</taxon>
        <taxon>Caudoviricetes</taxon>
        <taxon>Ravinvirus</taxon>
        <taxon>Ravinvirus N15</taxon>
    </lineage>
</organism>
<proteinExistence type="inferred from homology"/>
<protein>
    <recommendedName>
        <fullName evidence="4">Tail tip assembly protein K</fullName>
    </recommendedName>
    <alternativeName>
        <fullName evidence="5">Gene product 19</fullName>
        <shortName evidence="5">gp19</shortName>
    </alternativeName>
    <alternativeName>
        <fullName>Probable endopeptidase</fullName>
        <ecNumber>3.4.-.-</ecNumber>
    </alternativeName>
    <alternativeName>
        <fullName>Tail assembly protein K</fullName>
    </alternativeName>
</protein>
<comment type="function">
    <text evidence="1">Plays a role in tail tip complex assembly. The tail tip complex is assembled successively with three tail tip proteins J, one tail tip protein I, one tail tip protein L and one tail tip protein K. The tail tip complex interacts with tail measure protein to initiate tail tube assembly. The formation of the tail tip complex is completed by the addition of tail tip protein M, which is followed by tail tube polymerization. May be excluded form tail tip during maturation and would be absent from virions. May be involved in tail measure protein processing.</text>
</comment>
<comment type="subcellular location">
    <subcellularLocation>
        <location evidence="1">Host cytoplasm</location>
    </subcellularLocation>
</comment>
<comment type="similarity">
    <text evidence="3 5">Belongs to the peptidase C40 family.</text>
</comment>
<evidence type="ECO:0000250" key="1">
    <source>
        <dbReference type="UniProtKB" id="P03729"/>
    </source>
</evidence>
<evidence type="ECO:0000255" key="2">
    <source>
        <dbReference type="PROSITE-ProRule" id="PRU01182"/>
    </source>
</evidence>
<evidence type="ECO:0000255" key="3">
    <source>
        <dbReference type="PROSITE-ProRule" id="PRU01284"/>
    </source>
</evidence>
<evidence type="ECO:0000303" key="4">
    <source>
    </source>
</evidence>
<evidence type="ECO:0000305" key="5"/>
<evidence type="ECO:0000312" key="6">
    <source>
        <dbReference type="EMBL" id="AAC19055.1"/>
    </source>
</evidence>
<evidence type="ECO:0000312" key="7">
    <source>
        <dbReference type="Proteomes" id="UP000002132"/>
    </source>
</evidence>
<reference key="1">
    <citation type="journal article" date="2000" name="J. Mol. Biol.">
        <title>Genomic sequence and analysis of the atypical temperate bacteriophage N15.</title>
        <authorList>
            <person name="Ravin V."/>
            <person name="Ravin N."/>
            <person name="Casjens S."/>
            <person name="Ford M.E."/>
            <person name="Hatfull G.F."/>
            <person name="Hendrix R.W."/>
        </authorList>
    </citation>
    <scope>NUCLEOTIDE SEQUENCE [LARGE SCALE GENOMIC DNA]</scope>
    <scope>IDENTIFICATION</scope>
</reference>
<sequence length="243" mass="28325">MRQKTIDAIMAHAAAEYPRECCGVVAQKSRVERYFPCRNLSAEPTEHFHLSPEDYAAAEDWGTVVAIVHSHPDATTQPSELDKAQCDATLLPWHIVSWPEGDLRTIQPRGELPLLERPFVLGHFDCWGLVMSYFRQTHGIELHDYRVDYPWWENSYPDNFYQDCWYECGFREFDGPPQEGDLVIMQVQADKWNHAGILLEGNMLLHHLYGHLSQRVPYGGYWQERTMKIVRYKDVRGNEACRK</sequence>
<name>TIPK_BPN15</name>
<accession>O64333</accession>